<accession>A5U815</accession>
<sequence length="379" mass="39769">MTISDVPTQTLPAEGEIGLIDVGSLQLESGAVIDDVCIAVQRWGKLSPARDNVVVVLHALTGDSHITGPAGPGHPTPGWWDGVAGPGAPIDTTRWCAVATNVLGGCRGSTGPSSLARDGKPWGSRFPLISIRDQVQADVAALAALGITEVAAVVGGSMGGARALEWVVGYPDRVRAGLLLAVGARATADQIGTQTTQIAAIKADPDWQSGDYHETGRAPDAGLRLARRFAHLTYRGEIELDTRFANHNQGNEDPTAGGRYAVQSYLEHQGDKLLSRFDAGSYVILTEALNSHDVGRGRGGVSAALRACPVPVVVGGITSDRLYPLRLQQELADLLPGCAGLRVVESVYGHDGFLVETEAVGELIRQTLGLADREGACRR</sequence>
<gene>
    <name evidence="1" type="primary">metXA</name>
    <name type="ordered locus">MRA_3382</name>
</gene>
<name>METXA_MYCTA</name>
<dbReference type="EC" id="2.3.1.31" evidence="1"/>
<dbReference type="EMBL" id="CP000611">
    <property type="protein sequence ID" value="ABQ75165.1"/>
    <property type="molecule type" value="Genomic_DNA"/>
</dbReference>
<dbReference type="SMR" id="A5U815"/>
<dbReference type="ESTHER" id="myctu-metx">
    <property type="family name" value="Homoserine_transacetylase"/>
</dbReference>
<dbReference type="KEGG" id="mra:MRA_3382"/>
<dbReference type="eggNOG" id="COG2021">
    <property type="taxonomic scope" value="Bacteria"/>
</dbReference>
<dbReference type="HOGENOM" id="CLU_028760_1_0_11"/>
<dbReference type="UniPathway" id="UPA00051">
    <property type="reaction ID" value="UER00074"/>
</dbReference>
<dbReference type="Proteomes" id="UP000001988">
    <property type="component" value="Chromosome"/>
</dbReference>
<dbReference type="GO" id="GO:0005737">
    <property type="term" value="C:cytoplasm"/>
    <property type="evidence" value="ECO:0007669"/>
    <property type="project" value="UniProtKB-SubCell"/>
</dbReference>
<dbReference type="GO" id="GO:0004414">
    <property type="term" value="F:homoserine O-acetyltransferase activity"/>
    <property type="evidence" value="ECO:0007669"/>
    <property type="project" value="UniProtKB-UniRule"/>
</dbReference>
<dbReference type="GO" id="GO:0009092">
    <property type="term" value="P:homoserine metabolic process"/>
    <property type="evidence" value="ECO:0007669"/>
    <property type="project" value="TreeGrafter"/>
</dbReference>
<dbReference type="GO" id="GO:0009086">
    <property type="term" value="P:methionine biosynthetic process"/>
    <property type="evidence" value="ECO:0007669"/>
    <property type="project" value="UniProtKB-UniRule"/>
</dbReference>
<dbReference type="FunFam" id="3.40.50.1820:FF:000324">
    <property type="entry name" value="Homoserine O-acetyltransferase"/>
    <property type="match status" value="1"/>
</dbReference>
<dbReference type="Gene3D" id="3.40.50.1820">
    <property type="entry name" value="alpha/beta hydrolase"/>
    <property type="match status" value="1"/>
</dbReference>
<dbReference type="HAMAP" id="MF_00296">
    <property type="entry name" value="MetX_acyltransf"/>
    <property type="match status" value="1"/>
</dbReference>
<dbReference type="InterPro" id="IPR000073">
    <property type="entry name" value="AB_hydrolase_1"/>
</dbReference>
<dbReference type="InterPro" id="IPR029058">
    <property type="entry name" value="AB_hydrolase_fold"/>
</dbReference>
<dbReference type="InterPro" id="IPR008220">
    <property type="entry name" value="HAT_MetX-like"/>
</dbReference>
<dbReference type="NCBIfam" id="TIGR01392">
    <property type="entry name" value="homoserO_Ac_trn"/>
    <property type="match status" value="1"/>
</dbReference>
<dbReference type="NCBIfam" id="NF001209">
    <property type="entry name" value="PRK00175.1"/>
    <property type="match status" value="1"/>
</dbReference>
<dbReference type="PANTHER" id="PTHR32268">
    <property type="entry name" value="HOMOSERINE O-ACETYLTRANSFERASE"/>
    <property type="match status" value="1"/>
</dbReference>
<dbReference type="PANTHER" id="PTHR32268:SF11">
    <property type="entry name" value="HOMOSERINE O-ACETYLTRANSFERASE"/>
    <property type="match status" value="1"/>
</dbReference>
<dbReference type="Pfam" id="PF00561">
    <property type="entry name" value="Abhydrolase_1"/>
    <property type="match status" value="1"/>
</dbReference>
<dbReference type="PIRSF" id="PIRSF000443">
    <property type="entry name" value="Homoser_Ac_trans"/>
    <property type="match status" value="1"/>
</dbReference>
<dbReference type="SUPFAM" id="SSF53474">
    <property type="entry name" value="alpha/beta-Hydrolases"/>
    <property type="match status" value="1"/>
</dbReference>
<feature type="chain" id="PRO_1000021888" description="Homoserine O-acetyltransferase">
    <location>
        <begin position="1"/>
        <end position="379"/>
    </location>
</feature>
<feature type="domain" description="AB hydrolase-1" evidence="1">
    <location>
        <begin position="52"/>
        <end position="356"/>
    </location>
</feature>
<feature type="active site" description="Nucleophile" evidence="1">
    <location>
        <position position="157"/>
    </location>
</feature>
<feature type="active site" evidence="1">
    <location>
        <position position="320"/>
    </location>
</feature>
<feature type="active site" evidence="1">
    <location>
        <position position="350"/>
    </location>
</feature>
<feature type="binding site" evidence="1">
    <location>
        <position position="227"/>
    </location>
    <ligand>
        <name>substrate</name>
    </ligand>
</feature>
<feature type="binding site" evidence="1">
    <location>
        <position position="351"/>
    </location>
    <ligand>
        <name>substrate</name>
    </ligand>
</feature>
<protein>
    <recommendedName>
        <fullName evidence="1">Homoserine O-acetyltransferase</fullName>
        <shortName evidence="1">HAT</shortName>
        <ecNumber evidence="1">2.3.1.31</ecNumber>
    </recommendedName>
    <alternativeName>
        <fullName evidence="1">Homoserine transacetylase</fullName>
        <shortName evidence="1">HTA</shortName>
    </alternativeName>
</protein>
<comment type="function">
    <text evidence="1">Transfers an acetyl group from acetyl-CoA to L-homoserine, forming acetyl-L-homoserine.</text>
</comment>
<comment type="catalytic activity">
    <reaction evidence="1">
        <text>L-homoserine + acetyl-CoA = O-acetyl-L-homoserine + CoA</text>
        <dbReference type="Rhea" id="RHEA:13701"/>
        <dbReference type="ChEBI" id="CHEBI:57287"/>
        <dbReference type="ChEBI" id="CHEBI:57288"/>
        <dbReference type="ChEBI" id="CHEBI:57476"/>
        <dbReference type="ChEBI" id="CHEBI:57716"/>
        <dbReference type="EC" id="2.3.1.31"/>
    </reaction>
</comment>
<comment type="pathway">
    <text evidence="1">Amino-acid biosynthesis; L-methionine biosynthesis via de novo pathway; O-acetyl-L-homoserine from L-homoserine: step 1/1.</text>
</comment>
<comment type="subunit">
    <text evidence="1">Homodimer.</text>
</comment>
<comment type="subcellular location">
    <subcellularLocation>
        <location evidence="1">Cytoplasm</location>
    </subcellularLocation>
</comment>
<comment type="similarity">
    <text evidence="1">Belongs to the AB hydrolase superfamily. MetX family.</text>
</comment>
<evidence type="ECO:0000255" key="1">
    <source>
        <dbReference type="HAMAP-Rule" id="MF_00296"/>
    </source>
</evidence>
<organism>
    <name type="scientific">Mycobacterium tuberculosis (strain ATCC 25177 / H37Ra)</name>
    <dbReference type="NCBI Taxonomy" id="419947"/>
    <lineage>
        <taxon>Bacteria</taxon>
        <taxon>Bacillati</taxon>
        <taxon>Actinomycetota</taxon>
        <taxon>Actinomycetes</taxon>
        <taxon>Mycobacteriales</taxon>
        <taxon>Mycobacteriaceae</taxon>
        <taxon>Mycobacterium</taxon>
        <taxon>Mycobacterium tuberculosis complex</taxon>
    </lineage>
</organism>
<proteinExistence type="inferred from homology"/>
<reference key="1">
    <citation type="journal article" date="2008" name="PLoS ONE">
        <title>Genetic basis of virulence attenuation revealed by comparative genomic analysis of Mycobacterium tuberculosis strain H37Ra versus H37Rv.</title>
        <authorList>
            <person name="Zheng H."/>
            <person name="Lu L."/>
            <person name="Wang B."/>
            <person name="Pu S."/>
            <person name="Zhang X."/>
            <person name="Zhu G."/>
            <person name="Shi W."/>
            <person name="Zhang L."/>
            <person name="Wang H."/>
            <person name="Wang S."/>
            <person name="Zhao G."/>
            <person name="Zhang Y."/>
        </authorList>
    </citation>
    <scope>NUCLEOTIDE SEQUENCE [LARGE SCALE GENOMIC DNA]</scope>
    <source>
        <strain>ATCC 25177 / H37Ra</strain>
    </source>
</reference>
<keyword id="KW-0012">Acyltransferase</keyword>
<keyword id="KW-0028">Amino-acid biosynthesis</keyword>
<keyword id="KW-0963">Cytoplasm</keyword>
<keyword id="KW-0486">Methionine biosynthesis</keyword>
<keyword id="KW-1185">Reference proteome</keyword>
<keyword id="KW-0808">Transferase</keyword>